<evidence type="ECO:0000255" key="1">
    <source>
        <dbReference type="HAMAP-Rule" id="MF_00676"/>
    </source>
</evidence>
<proteinExistence type="inferred from homology"/>
<dbReference type="EMBL" id="CP000075">
    <property type="protein sequence ID" value="AAY36615.1"/>
    <property type="molecule type" value="Genomic_DNA"/>
</dbReference>
<dbReference type="RefSeq" id="WP_003407229.1">
    <property type="nucleotide sequence ID" value="NC_007005.1"/>
</dbReference>
<dbReference type="RefSeq" id="YP_234653.1">
    <property type="nucleotide sequence ID" value="NC_007005.1"/>
</dbReference>
<dbReference type="STRING" id="205918.Psyr_1567"/>
<dbReference type="KEGG" id="psb:Psyr_1567"/>
<dbReference type="PATRIC" id="fig|205918.7.peg.1601"/>
<dbReference type="eggNOG" id="COG2983">
    <property type="taxonomic scope" value="Bacteria"/>
</dbReference>
<dbReference type="HOGENOM" id="CLU_109769_0_1_6"/>
<dbReference type="OrthoDB" id="9786855at2"/>
<dbReference type="Proteomes" id="UP000000426">
    <property type="component" value="Chromosome"/>
</dbReference>
<dbReference type="HAMAP" id="MF_00676">
    <property type="entry name" value="UPF0260"/>
    <property type="match status" value="1"/>
</dbReference>
<dbReference type="InterPro" id="IPR005358">
    <property type="entry name" value="Puta_zinc/iron-chelating_dom"/>
</dbReference>
<dbReference type="InterPro" id="IPR008228">
    <property type="entry name" value="UCP006173"/>
</dbReference>
<dbReference type="NCBIfam" id="NF003501">
    <property type="entry name" value="PRK05170.1-5"/>
    <property type="match status" value="1"/>
</dbReference>
<dbReference type="NCBIfam" id="NF003502">
    <property type="entry name" value="PRK05170.1-6"/>
    <property type="match status" value="1"/>
</dbReference>
<dbReference type="NCBIfam" id="NF003507">
    <property type="entry name" value="PRK05170.2-5"/>
    <property type="match status" value="1"/>
</dbReference>
<dbReference type="PANTHER" id="PTHR37421">
    <property type="entry name" value="UPF0260 PROTEIN YCGN"/>
    <property type="match status" value="1"/>
</dbReference>
<dbReference type="PANTHER" id="PTHR37421:SF1">
    <property type="entry name" value="UPF0260 PROTEIN YCGN"/>
    <property type="match status" value="1"/>
</dbReference>
<dbReference type="Pfam" id="PF03692">
    <property type="entry name" value="CxxCxxCC"/>
    <property type="match status" value="1"/>
</dbReference>
<dbReference type="PIRSF" id="PIRSF006173">
    <property type="entry name" value="UCP006173"/>
    <property type="match status" value="1"/>
</dbReference>
<gene>
    <name type="ordered locus">Psyr_1567</name>
</gene>
<organism>
    <name type="scientific">Pseudomonas syringae pv. syringae (strain B728a)</name>
    <dbReference type="NCBI Taxonomy" id="205918"/>
    <lineage>
        <taxon>Bacteria</taxon>
        <taxon>Pseudomonadati</taxon>
        <taxon>Pseudomonadota</taxon>
        <taxon>Gammaproteobacteria</taxon>
        <taxon>Pseudomonadales</taxon>
        <taxon>Pseudomonadaceae</taxon>
        <taxon>Pseudomonas</taxon>
        <taxon>Pseudomonas syringae</taxon>
    </lineage>
</organism>
<protein>
    <recommendedName>
        <fullName evidence="1">UPF0260 protein Psyr_1567</fullName>
    </recommendedName>
</protein>
<reference key="1">
    <citation type="journal article" date="2005" name="Proc. Natl. Acad. Sci. U.S.A.">
        <title>Comparison of the complete genome sequences of Pseudomonas syringae pv. syringae B728a and pv. tomato DC3000.</title>
        <authorList>
            <person name="Feil H."/>
            <person name="Feil W.S."/>
            <person name="Chain P."/>
            <person name="Larimer F."/>
            <person name="Dibartolo G."/>
            <person name="Copeland A."/>
            <person name="Lykidis A."/>
            <person name="Trong S."/>
            <person name="Nolan M."/>
            <person name="Goltsman E."/>
            <person name="Thiel J."/>
            <person name="Malfatti S."/>
            <person name="Loper J.E."/>
            <person name="Lapidus A."/>
            <person name="Detter J.C."/>
            <person name="Land M."/>
            <person name="Richardson P.M."/>
            <person name="Kyrpides N.C."/>
            <person name="Ivanova N."/>
            <person name="Lindow S.E."/>
        </authorList>
    </citation>
    <scope>NUCLEOTIDE SEQUENCE [LARGE SCALE GENOMIC DNA]</scope>
    <source>
        <strain>B728a</strain>
    </source>
</reference>
<accession>Q4ZW57</accession>
<feature type="chain" id="PRO_1000044803" description="UPF0260 protein Psyr_1567">
    <location>
        <begin position="1"/>
        <end position="149"/>
    </location>
</feature>
<name>Y1567_PSEU2</name>
<comment type="similarity">
    <text evidence="1">Belongs to the UPF0260 family.</text>
</comment>
<sequence length="149" mass="17134">MAAKVEPFWMRKTLDQLDTQEWESLCDGCGLCCLQKLEDEEDNAVYYTRIACKLLDLKTCQCSDYANRRASVPDCIQLTPGQADEFKWLPPTCGYRLVSEGKDLPLWHHLVCGDRTAVHHERISQSGRMLSENNVAEDDWEDYLIFRAG</sequence>